<name>PANC_LARHH</name>
<reference key="1">
    <citation type="journal article" date="2009" name="PLoS Genet.">
        <title>The complete genome and proteome of Laribacter hongkongensis reveal potential mechanisms for adaptations to different temperatures and habitats.</title>
        <authorList>
            <person name="Woo P.C.Y."/>
            <person name="Lau S.K.P."/>
            <person name="Tse H."/>
            <person name="Teng J.L.L."/>
            <person name="Curreem S.O."/>
            <person name="Tsang A.K.L."/>
            <person name="Fan R.Y.Y."/>
            <person name="Wong G.K.M."/>
            <person name="Huang Y."/>
            <person name="Loman N.J."/>
            <person name="Snyder L.A.S."/>
            <person name="Cai J.J."/>
            <person name="Huang J.-D."/>
            <person name="Mak W."/>
            <person name="Pallen M.J."/>
            <person name="Lok S."/>
            <person name="Yuen K.-Y."/>
        </authorList>
    </citation>
    <scope>NUCLEOTIDE SEQUENCE [LARGE SCALE GENOMIC DNA]</scope>
    <source>
        <strain>HLHK9</strain>
    </source>
</reference>
<dbReference type="EC" id="6.3.2.1" evidence="1"/>
<dbReference type="EMBL" id="CP001154">
    <property type="protein sequence ID" value="ACO74389.1"/>
    <property type="molecule type" value="Genomic_DNA"/>
</dbReference>
<dbReference type="RefSeq" id="WP_012696875.1">
    <property type="nucleotide sequence ID" value="NC_012559.1"/>
</dbReference>
<dbReference type="SMR" id="C1D7E9"/>
<dbReference type="STRING" id="557598.LHK_01399"/>
<dbReference type="GeneID" id="75109823"/>
<dbReference type="KEGG" id="lhk:LHK_01399"/>
<dbReference type="eggNOG" id="COG0414">
    <property type="taxonomic scope" value="Bacteria"/>
</dbReference>
<dbReference type="HOGENOM" id="CLU_047148_0_0_4"/>
<dbReference type="UniPathway" id="UPA00028">
    <property type="reaction ID" value="UER00005"/>
</dbReference>
<dbReference type="Proteomes" id="UP000002010">
    <property type="component" value="Chromosome"/>
</dbReference>
<dbReference type="GO" id="GO:0005829">
    <property type="term" value="C:cytosol"/>
    <property type="evidence" value="ECO:0007669"/>
    <property type="project" value="TreeGrafter"/>
</dbReference>
<dbReference type="GO" id="GO:0005524">
    <property type="term" value="F:ATP binding"/>
    <property type="evidence" value="ECO:0007669"/>
    <property type="project" value="UniProtKB-KW"/>
</dbReference>
<dbReference type="GO" id="GO:0004592">
    <property type="term" value="F:pantoate-beta-alanine ligase activity"/>
    <property type="evidence" value="ECO:0007669"/>
    <property type="project" value="UniProtKB-UniRule"/>
</dbReference>
<dbReference type="GO" id="GO:0015940">
    <property type="term" value="P:pantothenate biosynthetic process"/>
    <property type="evidence" value="ECO:0007669"/>
    <property type="project" value="UniProtKB-UniRule"/>
</dbReference>
<dbReference type="CDD" id="cd00560">
    <property type="entry name" value="PanC"/>
    <property type="match status" value="1"/>
</dbReference>
<dbReference type="FunFam" id="3.30.1300.10:FF:000001">
    <property type="entry name" value="Pantothenate synthetase"/>
    <property type="match status" value="1"/>
</dbReference>
<dbReference type="FunFam" id="3.40.50.620:FF:000013">
    <property type="entry name" value="Pantothenate synthetase"/>
    <property type="match status" value="1"/>
</dbReference>
<dbReference type="Gene3D" id="3.40.50.620">
    <property type="entry name" value="HUPs"/>
    <property type="match status" value="1"/>
</dbReference>
<dbReference type="Gene3D" id="3.30.1300.10">
    <property type="entry name" value="Pantoate-beta-alanine ligase, C-terminal domain"/>
    <property type="match status" value="1"/>
</dbReference>
<dbReference type="HAMAP" id="MF_00158">
    <property type="entry name" value="PanC"/>
    <property type="match status" value="1"/>
</dbReference>
<dbReference type="InterPro" id="IPR004821">
    <property type="entry name" value="Cyt_trans-like"/>
</dbReference>
<dbReference type="InterPro" id="IPR003721">
    <property type="entry name" value="Pantoate_ligase"/>
</dbReference>
<dbReference type="InterPro" id="IPR042176">
    <property type="entry name" value="Pantoate_ligase_C"/>
</dbReference>
<dbReference type="InterPro" id="IPR014729">
    <property type="entry name" value="Rossmann-like_a/b/a_fold"/>
</dbReference>
<dbReference type="NCBIfam" id="TIGR00125">
    <property type="entry name" value="cyt_tran_rel"/>
    <property type="match status" value="1"/>
</dbReference>
<dbReference type="NCBIfam" id="TIGR00018">
    <property type="entry name" value="panC"/>
    <property type="match status" value="1"/>
</dbReference>
<dbReference type="PANTHER" id="PTHR21299">
    <property type="entry name" value="CYTIDYLATE KINASE/PANTOATE-BETA-ALANINE LIGASE"/>
    <property type="match status" value="1"/>
</dbReference>
<dbReference type="PANTHER" id="PTHR21299:SF1">
    <property type="entry name" value="PANTOATE--BETA-ALANINE LIGASE"/>
    <property type="match status" value="1"/>
</dbReference>
<dbReference type="Pfam" id="PF02569">
    <property type="entry name" value="Pantoate_ligase"/>
    <property type="match status" value="1"/>
</dbReference>
<dbReference type="SUPFAM" id="SSF52374">
    <property type="entry name" value="Nucleotidylyl transferase"/>
    <property type="match status" value="1"/>
</dbReference>
<comment type="function">
    <text evidence="1">Catalyzes the condensation of pantoate with beta-alanine in an ATP-dependent reaction via a pantoyl-adenylate intermediate.</text>
</comment>
<comment type="catalytic activity">
    <reaction evidence="1">
        <text>(R)-pantoate + beta-alanine + ATP = (R)-pantothenate + AMP + diphosphate + H(+)</text>
        <dbReference type="Rhea" id="RHEA:10912"/>
        <dbReference type="ChEBI" id="CHEBI:15378"/>
        <dbReference type="ChEBI" id="CHEBI:15980"/>
        <dbReference type="ChEBI" id="CHEBI:29032"/>
        <dbReference type="ChEBI" id="CHEBI:30616"/>
        <dbReference type="ChEBI" id="CHEBI:33019"/>
        <dbReference type="ChEBI" id="CHEBI:57966"/>
        <dbReference type="ChEBI" id="CHEBI:456215"/>
        <dbReference type="EC" id="6.3.2.1"/>
    </reaction>
</comment>
<comment type="pathway">
    <text evidence="1">Cofactor biosynthesis; (R)-pantothenate biosynthesis; (R)-pantothenate from (R)-pantoate and beta-alanine: step 1/1.</text>
</comment>
<comment type="subunit">
    <text evidence="1">Homodimer.</text>
</comment>
<comment type="subcellular location">
    <subcellularLocation>
        <location evidence="1">Cytoplasm</location>
    </subcellularLocation>
</comment>
<comment type="miscellaneous">
    <text evidence="1">The reaction proceeds by a bi uni uni bi ping pong mechanism.</text>
</comment>
<comment type="similarity">
    <text evidence="1">Belongs to the pantothenate synthetase family.</text>
</comment>
<organism>
    <name type="scientific">Laribacter hongkongensis (strain HLHK9)</name>
    <dbReference type="NCBI Taxonomy" id="557598"/>
    <lineage>
        <taxon>Bacteria</taxon>
        <taxon>Pseudomonadati</taxon>
        <taxon>Pseudomonadota</taxon>
        <taxon>Betaproteobacteria</taxon>
        <taxon>Neisseriales</taxon>
        <taxon>Aquaspirillaceae</taxon>
        <taxon>Laribacter</taxon>
    </lineage>
</organism>
<evidence type="ECO:0000255" key="1">
    <source>
        <dbReference type="HAMAP-Rule" id="MF_00158"/>
    </source>
</evidence>
<sequence length="277" mass="31324">MDIIRTIEEMRSWRQKAGRVALVPTMGNLHEGHLALVREAKKQAERVVVSIFVNRLQFGQGEDFDSYPRTFEADRDKLAAAGVDALFLPDERELYPRIRQDFNVEPPHIQDELCGAFRPGHFRGVATVVTKLFNIVQPDAACFGKKDFQQLHIIQAMVADLNQPVKVVPVDIGRAADGLALSSRNGYLSAGEREEAPRLFRELSRIRENLIDGENDYASLEQDARATLEQHGWRVDYVEIRQADTLELAHAGEKRLVVLAAARIGKTRLIDNVEIFR</sequence>
<feature type="chain" id="PRO_1000123416" description="Pantothenate synthetase">
    <location>
        <begin position="1"/>
        <end position="277"/>
    </location>
</feature>
<feature type="active site" description="Proton donor" evidence="1">
    <location>
        <position position="33"/>
    </location>
</feature>
<feature type="binding site" evidence="1">
    <location>
        <begin position="26"/>
        <end position="33"/>
    </location>
    <ligand>
        <name>ATP</name>
        <dbReference type="ChEBI" id="CHEBI:30616"/>
    </ligand>
</feature>
<feature type="binding site" evidence="1">
    <location>
        <position position="57"/>
    </location>
    <ligand>
        <name>(R)-pantoate</name>
        <dbReference type="ChEBI" id="CHEBI:15980"/>
    </ligand>
</feature>
<feature type="binding site" evidence="1">
    <location>
        <position position="57"/>
    </location>
    <ligand>
        <name>beta-alanine</name>
        <dbReference type="ChEBI" id="CHEBI:57966"/>
    </ligand>
</feature>
<feature type="binding site" evidence="1">
    <location>
        <begin position="144"/>
        <end position="147"/>
    </location>
    <ligand>
        <name>ATP</name>
        <dbReference type="ChEBI" id="CHEBI:30616"/>
    </ligand>
</feature>
<feature type="binding site" evidence="1">
    <location>
        <position position="150"/>
    </location>
    <ligand>
        <name>(R)-pantoate</name>
        <dbReference type="ChEBI" id="CHEBI:15980"/>
    </ligand>
</feature>
<feature type="binding site" evidence="1">
    <location>
        <position position="173"/>
    </location>
    <ligand>
        <name>ATP</name>
        <dbReference type="ChEBI" id="CHEBI:30616"/>
    </ligand>
</feature>
<feature type="binding site" evidence="1">
    <location>
        <begin position="181"/>
        <end position="184"/>
    </location>
    <ligand>
        <name>ATP</name>
        <dbReference type="ChEBI" id="CHEBI:30616"/>
    </ligand>
</feature>
<gene>
    <name evidence="1" type="primary">panC</name>
    <name type="ordered locus">LHK_01399</name>
</gene>
<proteinExistence type="inferred from homology"/>
<accession>C1D7E9</accession>
<keyword id="KW-0067">ATP-binding</keyword>
<keyword id="KW-0963">Cytoplasm</keyword>
<keyword id="KW-0436">Ligase</keyword>
<keyword id="KW-0547">Nucleotide-binding</keyword>
<keyword id="KW-0566">Pantothenate biosynthesis</keyword>
<keyword id="KW-1185">Reference proteome</keyword>
<protein>
    <recommendedName>
        <fullName evidence="1">Pantothenate synthetase</fullName>
        <shortName evidence="1">PS</shortName>
        <ecNumber evidence="1">6.3.2.1</ecNumber>
    </recommendedName>
    <alternativeName>
        <fullName evidence="1">Pantoate--beta-alanine ligase</fullName>
    </alternativeName>
    <alternativeName>
        <fullName evidence="1">Pantoate-activating enzyme</fullName>
    </alternativeName>
</protein>